<name>EGLN_PIG</name>
<accession>P37176</accession>
<reference key="1">
    <citation type="journal article" date="1994" name="J. Biol. Chem.">
        <title>Endoglin forms a heteromeric complex with the signaling receptors for transforming growth factor-beta.</title>
        <authorList>
            <person name="Yamashita H."/>
            <person name="Ichijo H."/>
            <person name="Grimsby S."/>
            <person name="Moren A."/>
            <person name="ten Dijke P."/>
            <person name="Miyazono K."/>
        </authorList>
    </citation>
    <scope>NUCLEOTIDE SEQUENCE [MRNA]</scope>
    <scope>FUNCTION</scope>
    <scope>SUBCELLULAR LOCATION</scope>
    <scope>INTERACTION WITH TGFB1 AND TGFB2</scope>
    <source>
        <tissue>Uterus</tissue>
    </source>
</reference>
<gene>
    <name type="primary">ENG</name>
</gene>
<evidence type="ECO:0000250" key="1">
    <source>
        <dbReference type="UniProtKB" id="P17813"/>
    </source>
</evidence>
<evidence type="ECO:0000250" key="2">
    <source>
        <dbReference type="UniProtKB" id="Q63961"/>
    </source>
</evidence>
<evidence type="ECO:0000255" key="3"/>
<evidence type="ECO:0000255" key="4">
    <source>
        <dbReference type="PROSITE-ProRule" id="PRU00375"/>
    </source>
</evidence>
<evidence type="ECO:0000256" key="5">
    <source>
        <dbReference type="SAM" id="MobiDB-lite"/>
    </source>
</evidence>
<evidence type="ECO:0000269" key="6">
    <source>
    </source>
</evidence>
<evidence type="ECO:0000305" key="7">
    <source>
    </source>
</evidence>
<protein>
    <recommendedName>
        <fullName>Endoglin</fullName>
    </recommendedName>
    <cdAntigenName>CD105</cdAntigenName>
</protein>
<comment type="function">
    <text evidence="1 2 6">Vascular endothelium glycoprotein that plays an important role in the regulation of angiogenesis. Required for normal structure and integrity of adult vasculature. Regulates the migration of vascular endothelial cells (By similarity). Required for normal extraembryonic angiogenesis and for embryonic heart development (By similarity). May regulate endothelial cell shape changes in response to blood flow, which drive vascular remodeling and establishment of normal vascular morphology during angiogenesis (By similarity). May play a role in the binding of endothelial cells to integrins (By similarity). Acts as a TGF-beta coreceptor and is involved in the TGF-beta/BMP signaling cascade that ultimately leads to the activation of SMAD transcription factors (PubMed:8294451). Required for GDF2/BMP9 signaling through SMAD1 in endothelial cells and modulates TGFB1 signaling through SMAD3 (By similarity).</text>
</comment>
<comment type="subunit">
    <text evidence="1 6">Homodimer; disulfide-linked. Forms a heteromeric complex with the signaling receptors for transforming growth factor-beta: TGFBR1 and/or TGFBR2. It is able to bind TGFB1 and TGFB2 with high affinity, but not TGFB3 (PubMed:8294451). Interacts with GDF2, forming a heterotetramer with a 2:2 stoichiometry. Interacts with ACVRL1. Can form a heteromeric complex with GDF2 and ACVRL1. Interacts with BMP10. Interacts with DYNLT4. Interacts with ARRB2 (By similarity).</text>
</comment>
<comment type="subcellular location">
    <subcellularLocation>
        <location evidence="7">Cell membrane</location>
        <topology>Single-pass type I membrane protein</topology>
    </subcellularLocation>
</comment>
<comment type="domain">
    <text evidence="1">The ZP domain mediates dimerization.</text>
</comment>
<comment type="domain">
    <text evidence="1">The N-terminal OR region is composed of two intertwined domains (OR1 and OR2) with a common, novel fold. Each contains 12 beta-strands that form a parallel beta-helix-like structure, plus a single alpha-helix. The OR1 region mediates interaction with GDF2.</text>
</comment>
<comment type="miscellaneous">
    <text evidence="7">Lacks a RGD motif, contrary to the human protein.</text>
</comment>
<dbReference type="EMBL" id="Z23142">
    <property type="protein sequence ID" value="CAA80673.1"/>
    <property type="molecule type" value="mRNA"/>
</dbReference>
<dbReference type="PIR" id="A49722">
    <property type="entry name" value="A49722"/>
</dbReference>
<dbReference type="RefSeq" id="NP_999196.1">
    <property type="nucleotide sequence ID" value="NM_214031.1"/>
</dbReference>
<dbReference type="SMR" id="P37176"/>
<dbReference type="FunCoup" id="P37176">
    <property type="interactions" value="220"/>
</dbReference>
<dbReference type="STRING" id="9823.ENSSSCP00000030121"/>
<dbReference type="GlyCosmos" id="P37176">
    <property type="glycosylation" value="2 sites, No reported glycans"/>
</dbReference>
<dbReference type="GlyGen" id="P37176">
    <property type="glycosylation" value="4 sites"/>
</dbReference>
<dbReference type="PaxDb" id="9823-ENSSSCP00000006026"/>
<dbReference type="PeptideAtlas" id="P37176"/>
<dbReference type="GeneID" id="397096"/>
<dbReference type="KEGG" id="ssc:397096"/>
<dbReference type="CTD" id="2022"/>
<dbReference type="eggNOG" id="ENOG502RZQ9">
    <property type="taxonomic scope" value="Eukaryota"/>
</dbReference>
<dbReference type="InParanoid" id="P37176"/>
<dbReference type="OrthoDB" id="10072329at2759"/>
<dbReference type="Proteomes" id="UP000008227">
    <property type="component" value="Unplaced"/>
</dbReference>
<dbReference type="Proteomes" id="UP000314985">
    <property type="component" value="Unplaced"/>
</dbReference>
<dbReference type="Proteomes" id="UP000694570">
    <property type="component" value="Unplaced"/>
</dbReference>
<dbReference type="Proteomes" id="UP000694571">
    <property type="component" value="Unplaced"/>
</dbReference>
<dbReference type="Proteomes" id="UP000694720">
    <property type="component" value="Unplaced"/>
</dbReference>
<dbReference type="Proteomes" id="UP000694722">
    <property type="component" value="Unplaced"/>
</dbReference>
<dbReference type="Proteomes" id="UP000694723">
    <property type="component" value="Unplaced"/>
</dbReference>
<dbReference type="Proteomes" id="UP000694724">
    <property type="component" value="Unplaced"/>
</dbReference>
<dbReference type="Proteomes" id="UP000694725">
    <property type="component" value="Unplaced"/>
</dbReference>
<dbReference type="Proteomes" id="UP000694726">
    <property type="component" value="Unplaced"/>
</dbReference>
<dbReference type="Proteomes" id="UP000694727">
    <property type="component" value="Unplaced"/>
</dbReference>
<dbReference type="Proteomes" id="UP000694728">
    <property type="component" value="Unplaced"/>
</dbReference>
<dbReference type="GO" id="GO:0009986">
    <property type="term" value="C:cell surface"/>
    <property type="evidence" value="ECO:0000318"/>
    <property type="project" value="GO_Central"/>
</dbReference>
<dbReference type="GO" id="GO:0005615">
    <property type="term" value="C:extracellular space"/>
    <property type="evidence" value="ECO:0000318"/>
    <property type="project" value="GO_Central"/>
</dbReference>
<dbReference type="GO" id="GO:0005886">
    <property type="term" value="C:plasma membrane"/>
    <property type="evidence" value="ECO:0007669"/>
    <property type="project" value="UniProtKB-SubCell"/>
</dbReference>
<dbReference type="GO" id="GO:0005539">
    <property type="term" value="F:glycosaminoglycan binding"/>
    <property type="evidence" value="ECO:0000314"/>
    <property type="project" value="BHF-UCL"/>
</dbReference>
<dbReference type="GO" id="GO:0034713">
    <property type="term" value="F:type I transforming growth factor beta receptor binding"/>
    <property type="evidence" value="ECO:0000314"/>
    <property type="project" value="BHF-UCL"/>
</dbReference>
<dbReference type="GO" id="GO:0005114">
    <property type="term" value="F:type II transforming growth factor beta receptor binding"/>
    <property type="evidence" value="ECO:0000314"/>
    <property type="project" value="BHF-UCL"/>
</dbReference>
<dbReference type="GO" id="GO:0001525">
    <property type="term" value="P:angiogenesis"/>
    <property type="evidence" value="ECO:0007669"/>
    <property type="project" value="UniProtKB-KW"/>
</dbReference>
<dbReference type="GO" id="GO:0007155">
    <property type="term" value="P:cell adhesion"/>
    <property type="evidence" value="ECO:0007669"/>
    <property type="project" value="UniProtKB-KW"/>
</dbReference>
<dbReference type="GO" id="GO:0007179">
    <property type="term" value="P:transforming growth factor beta receptor signaling pathway"/>
    <property type="evidence" value="ECO:0000314"/>
    <property type="project" value="BHF-UCL"/>
</dbReference>
<dbReference type="GO" id="GO:0001570">
    <property type="term" value="P:vasculogenesis"/>
    <property type="evidence" value="ECO:0000318"/>
    <property type="project" value="GO_Central"/>
</dbReference>
<dbReference type="Gene3D" id="2.60.40.3210">
    <property type="entry name" value="Zona pellucida, ZP-N domain"/>
    <property type="match status" value="1"/>
</dbReference>
<dbReference type="InterPro" id="IPR055356">
    <property type="entry name" value="ZP-N"/>
</dbReference>
<dbReference type="PANTHER" id="PTHR14002:SF1">
    <property type="entry name" value="ENDOGLIN"/>
    <property type="match status" value="1"/>
</dbReference>
<dbReference type="PANTHER" id="PTHR14002">
    <property type="entry name" value="ENDOGLIN/TGF-BETA RECEPTOR TYPE III"/>
    <property type="match status" value="1"/>
</dbReference>
<dbReference type="Pfam" id="PF23344">
    <property type="entry name" value="ZP-N"/>
    <property type="match status" value="1"/>
</dbReference>
<feature type="signal peptide" evidence="3">
    <location>
        <begin position="1"/>
        <end position="24"/>
    </location>
</feature>
<feature type="chain" id="PRO_0000021158" description="Endoglin">
    <location>
        <begin position="25"/>
        <end position="653"/>
    </location>
</feature>
<feature type="topological domain" description="Extracellular" evidence="3">
    <location>
        <begin position="25"/>
        <end position="581"/>
    </location>
</feature>
<feature type="transmembrane region" description="Helical" evidence="3">
    <location>
        <begin position="582"/>
        <end position="606"/>
    </location>
</feature>
<feature type="topological domain" description="Cytoplasmic" evidence="3">
    <location>
        <begin position="607"/>
        <end position="653"/>
    </location>
</feature>
<feature type="domain" description="ZP" evidence="4">
    <location>
        <begin position="362"/>
        <end position="512"/>
    </location>
</feature>
<feature type="region of interest" description="Required for interaction with GDF2" evidence="1">
    <location>
        <begin position="27"/>
        <end position="336"/>
    </location>
</feature>
<feature type="region of interest" description="OR1, N-terminal part" evidence="1">
    <location>
        <begin position="27"/>
        <end position="44"/>
    </location>
</feature>
<feature type="region of interest" description="OR2" evidence="1">
    <location>
        <begin position="45"/>
        <end position="198"/>
    </location>
</feature>
<feature type="region of interest" description="OR1, C-terminal part" evidence="1">
    <location>
        <begin position="199"/>
        <end position="329"/>
    </location>
</feature>
<feature type="region of interest" description="Essential for interaction with GDF2" evidence="1">
    <location>
        <begin position="269"/>
        <end position="281"/>
    </location>
</feature>
<feature type="region of interest" description="Disordered" evidence="5">
    <location>
        <begin position="625"/>
        <end position="653"/>
    </location>
</feature>
<feature type="compositionally biased region" description="Low complexity" evidence="5">
    <location>
        <begin position="625"/>
        <end position="634"/>
    </location>
</feature>
<feature type="compositionally biased region" description="Polar residues" evidence="5">
    <location>
        <begin position="635"/>
        <end position="653"/>
    </location>
</feature>
<feature type="modified residue" description="Phosphoserine; by TGFBR1" evidence="2">
    <location>
        <position position="641"/>
    </location>
</feature>
<feature type="modified residue" description="Phosphoserine; by TGFBR1" evidence="2">
    <location>
        <position position="644"/>
    </location>
</feature>
<feature type="glycosylation site" description="N-linked (GlcNAc...) asparagine" evidence="3">
    <location>
        <position position="57"/>
    </location>
</feature>
<feature type="glycosylation site" description="N-linked (GlcNAc...) asparagine" evidence="3">
    <location>
        <position position="306"/>
    </location>
</feature>
<feature type="disulfide bond" evidence="1">
    <location>
        <begin position="31"/>
        <end position="206"/>
    </location>
</feature>
<feature type="disulfide bond" evidence="1">
    <location>
        <begin position="51"/>
        <end position="181"/>
    </location>
</feature>
<feature type="disulfide bond" evidence="1">
    <location>
        <begin position="241"/>
        <end position="329"/>
    </location>
</feature>
<feature type="disulfide bond" evidence="1">
    <location>
        <begin position="349"/>
        <end position="381"/>
    </location>
</feature>
<feature type="disulfide bond" evidence="1">
    <location>
        <begin position="362"/>
        <end position="442"/>
    </location>
</feature>
<feature type="disulfide bond" evidence="1">
    <location>
        <begin position="393"/>
        <end position="411"/>
    </location>
</feature>
<feature type="disulfide bond" evidence="1">
    <location>
        <begin position="493"/>
        <end position="549"/>
    </location>
</feature>
<feature type="disulfide bond" description="Interchain" evidence="1">
    <location>
        <position position="516"/>
    </location>
</feature>
<sequence length="653" mass="70280">MDRGVLPQAIALLLAVCSFGPTAGLAEGVQCDLQPVDPKVTYTTSQVSEGCVAHVPNATVGVHILFLEFSKEVSTLELTVQMTNPNGARPQEVLLILSVNKNIHLTLQVPEIPLHLAYDSKLVFLQEAPKAVITELPPSTTKNQLFLWANTKGSIISAAELDNPQSILLRLDQAPTSPSRCTLEPRKDMGHTLEWKSHTQASVLGCHLEGVTGHKEAHILRVLPGSEAWPRTVTVEVELSCALRDPEAVLILQGPPYVSWLIDANHNVKAWTTGEYSFKIFPGSNIQGVNLPDTRQGLLEEARKLNASVIASFVELPLASVISLQDRSCGSGLQPSPTTVQITPPGEGCNQDLLLSLIQPRCSDDVMTLVLRKDLISTLGCTITSLTFWDPSCQAEDTDDKFVLRGTYSSCGMKVAENVVISNEVVVNLLSSSSPQRKQVQCINLDSLSFQLGLYLSPHFLQASNTIELGQQGFVQVSMSPSIPELMTQLDSCQLNLGPDVEMVDLIQNQEAKSSCVSLLSPSPGGDMRFSFLLRGYVVPMPTAGILSCTVALRPRTWSLDVHKTASTRLNIVSPGLPDKGLVLPAVLGITFGAFLIGALLTAALWYIHSHTRHPGKREPVVAVAAPASSESSSTNHSIGSTQSTPCSTSSMA</sequence>
<organism>
    <name type="scientific">Sus scrofa</name>
    <name type="common">Pig</name>
    <dbReference type="NCBI Taxonomy" id="9823"/>
    <lineage>
        <taxon>Eukaryota</taxon>
        <taxon>Metazoa</taxon>
        <taxon>Chordata</taxon>
        <taxon>Craniata</taxon>
        <taxon>Vertebrata</taxon>
        <taxon>Euteleostomi</taxon>
        <taxon>Mammalia</taxon>
        <taxon>Eutheria</taxon>
        <taxon>Laurasiatheria</taxon>
        <taxon>Artiodactyla</taxon>
        <taxon>Suina</taxon>
        <taxon>Suidae</taxon>
        <taxon>Sus</taxon>
    </lineage>
</organism>
<keyword id="KW-0037">Angiogenesis</keyword>
<keyword id="KW-0130">Cell adhesion</keyword>
<keyword id="KW-1003">Cell membrane</keyword>
<keyword id="KW-1015">Disulfide bond</keyword>
<keyword id="KW-0325">Glycoprotein</keyword>
<keyword id="KW-0472">Membrane</keyword>
<keyword id="KW-0597">Phosphoprotein</keyword>
<keyword id="KW-1185">Reference proteome</keyword>
<keyword id="KW-0732">Signal</keyword>
<keyword id="KW-0812">Transmembrane</keyword>
<keyword id="KW-1133">Transmembrane helix</keyword>
<proteinExistence type="evidence at protein level"/>